<organism>
    <name type="scientific">Pyrobaculum islandicum (strain DSM 4184 / JCM 9189 / GEO3)</name>
    <dbReference type="NCBI Taxonomy" id="384616"/>
    <lineage>
        <taxon>Archaea</taxon>
        <taxon>Thermoproteota</taxon>
        <taxon>Thermoprotei</taxon>
        <taxon>Thermoproteales</taxon>
        <taxon>Thermoproteaceae</taxon>
        <taxon>Pyrobaculum</taxon>
    </lineage>
</organism>
<dbReference type="EC" id="6.5.1.1" evidence="1"/>
<dbReference type="EMBL" id="CP000504">
    <property type="protein sequence ID" value="ABL88286.1"/>
    <property type="molecule type" value="Genomic_DNA"/>
</dbReference>
<dbReference type="RefSeq" id="WP_011762861.1">
    <property type="nucleotide sequence ID" value="NC_008701.1"/>
</dbReference>
<dbReference type="SMR" id="A1RTK4"/>
<dbReference type="STRING" id="384616.Pisl_1115"/>
<dbReference type="GeneID" id="4616742"/>
<dbReference type="KEGG" id="pis:Pisl_1115"/>
<dbReference type="eggNOG" id="arCOG01347">
    <property type="taxonomic scope" value="Archaea"/>
</dbReference>
<dbReference type="HOGENOM" id="CLU_005138_6_0_2"/>
<dbReference type="OrthoDB" id="31274at2157"/>
<dbReference type="Proteomes" id="UP000002595">
    <property type="component" value="Chromosome"/>
</dbReference>
<dbReference type="GO" id="GO:0005524">
    <property type="term" value="F:ATP binding"/>
    <property type="evidence" value="ECO:0007669"/>
    <property type="project" value="UniProtKB-UniRule"/>
</dbReference>
<dbReference type="GO" id="GO:0003677">
    <property type="term" value="F:DNA binding"/>
    <property type="evidence" value="ECO:0007669"/>
    <property type="project" value="InterPro"/>
</dbReference>
<dbReference type="GO" id="GO:0003910">
    <property type="term" value="F:DNA ligase (ATP) activity"/>
    <property type="evidence" value="ECO:0007669"/>
    <property type="project" value="UniProtKB-UniRule"/>
</dbReference>
<dbReference type="GO" id="GO:0046872">
    <property type="term" value="F:metal ion binding"/>
    <property type="evidence" value="ECO:0007669"/>
    <property type="project" value="UniProtKB-KW"/>
</dbReference>
<dbReference type="GO" id="GO:0051301">
    <property type="term" value="P:cell division"/>
    <property type="evidence" value="ECO:0007669"/>
    <property type="project" value="UniProtKB-KW"/>
</dbReference>
<dbReference type="GO" id="GO:0071897">
    <property type="term" value="P:DNA biosynthetic process"/>
    <property type="evidence" value="ECO:0007669"/>
    <property type="project" value="InterPro"/>
</dbReference>
<dbReference type="GO" id="GO:0006310">
    <property type="term" value="P:DNA recombination"/>
    <property type="evidence" value="ECO:0007669"/>
    <property type="project" value="UniProtKB-UniRule"/>
</dbReference>
<dbReference type="GO" id="GO:0006281">
    <property type="term" value="P:DNA repair"/>
    <property type="evidence" value="ECO:0007669"/>
    <property type="project" value="UniProtKB-UniRule"/>
</dbReference>
<dbReference type="GO" id="GO:0006273">
    <property type="term" value="P:lagging strand elongation"/>
    <property type="evidence" value="ECO:0007669"/>
    <property type="project" value="TreeGrafter"/>
</dbReference>
<dbReference type="CDD" id="cd07901">
    <property type="entry name" value="Adenylation_DNA_ligase_Arch_LigB"/>
    <property type="match status" value="1"/>
</dbReference>
<dbReference type="CDD" id="cd07969">
    <property type="entry name" value="OBF_DNA_ligase_I"/>
    <property type="match status" value="1"/>
</dbReference>
<dbReference type="FunFam" id="1.10.3260.10:FF:000007">
    <property type="entry name" value="DNA ligase"/>
    <property type="match status" value="1"/>
</dbReference>
<dbReference type="FunFam" id="2.40.50.140:FF:000062">
    <property type="entry name" value="DNA ligase"/>
    <property type="match status" value="1"/>
</dbReference>
<dbReference type="FunFam" id="3.30.470.30:FF:000012">
    <property type="entry name" value="Probable DNA ligase"/>
    <property type="match status" value="1"/>
</dbReference>
<dbReference type="Gene3D" id="1.10.3260.10">
    <property type="entry name" value="DNA ligase, ATP-dependent, N-terminal domain"/>
    <property type="match status" value="1"/>
</dbReference>
<dbReference type="Gene3D" id="3.30.470.30">
    <property type="entry name" value="DNA ligase/mRNA capping enzyme"/>
    <property type="match status" value="1"/>
</dbReference>
<dbReference type="Gene3D" id="2.40.50.140">
    <property type="entry name" value="Nucleic acid-binding proteins"/>
    <property type="match status" value="1"/>
</dbReference>
<dbReference type="HAMAP" id="MF_00407">
    <property type="entry name" value="DNA_ligase"/>
    <property type="match status" value="1"/>
</dbReference>
<dbReference type="InterPro" id="IPR050191">
    <property type="entry name" value="ATP-dep_DNA_ligase"/>
</dbReference>
<dbReference type="InterPro" id="IPR022865">
    <property type="entry name" value="DNA_ligae_ATP-dep_bac/arc"/>
</dbReference>
<dbReference type="InterPro" id="IPR000977">
    <property type="entry name" value="DNA_ligase_ATP-dep"/>
</dbReference>
<dbReference type="InterPro" id="IPR012309">
    <property type="entry name" value="DNA_ligase_ATP-dep_C"/>
</dbReference>
<dbReference type="InterPro" id="IPR012310">
    <property type="entry name" value="DNA_ligase_ATP-dep_cent"/>
</dbReference>
<dbReference type="InterPro" id="IPR016059">
    <property type="entry name" value="DNA_ligase_ATP-dep_CS"/>
</dbReference>
<dbReference type="InterPro" id="IPR012308">
    <property type="entry name" value="DNA_ligase_ATP-dep_N"/>
</dbReference>
<dbReference type="InterPro" id="IPR036599">
    <property type="entry name" value="DNA_ligase_N_sf"/>
</dbReference>
<dbReference type="InterPro" id="IPR012340">
    <property type="entry name" value="NA-bd_OB-fold"/>
</dbReference>
<dbReference type="NCBIfam" id="TIGR00574">
    <property type="entry name" value="dnl1"/>
    <property type="match status" value="1"/>
</dbReference>
<dbReference type="PANTHER" id="PTHR45674:SF4">
    <property type="entry name" value="DNA LIGASE 1"/>
    <property type="match status" value="1"/>
</dbReference>
<dbReference type="PANTHER" id="PTHR45674">
    <property type="entry name" value="DNA LIGASE 1/3 FAMILY MEMBER"/>
    <property type="match status" value="1"/>
</dbReference>
<dbReference type="Pfam" id="PF04679">
    <property type="entry name" value="DNA_ligase_A_C"/>
    <property type="match status" value="1"/>
</dbReference>
<dbReference type="Pfam" id="PF01068">
    <property type="entry name" value="DNA_ligase_A_M"/>
    <property type="match status" value="1"/>
</dbReference>
<dbReference type="Pfam" id="PF04675">
    <property type="entry name" value="DNA_ligase_A_N"/>
    <property type="match status" value="1"/>
</dbReference>
<dbReference type="SUPFAM" id="SSF117018">
    <property type="entry name" value="ATP-dependent DNA ligase DNA-binding domain"/>
    <property type="match status" value="1"/>
</dbReference>
<dbReference type="SUPFAM" id="SSF56091">
    <property type="entry name" value="DNA ligase/mRNA capping enzyme, catalytic domain"/>
    <property type="match status" value="1"/>
</dbReference>
<dbReference type="SUPFAM" id="SSF50249">
    <property type="entry name" value="Nucleic acid-binding proteins"/>
    <property type="match status" value="1"/>
</dbReference>
<dbReference type="PROSITE" id="PS00697">
    <property type="entry name" value="DNA_LIGASE_A1"/>
    <property type="match status" value="1"/>
</dbReference>
<dbReference type="PROSITE" id="PS50160">
    <property type="entry name" value="DNA_LIGASE_A3"/>
    <property type="match status" value="1"/>
</dbReference>
<comment type="function">
    <text evidence="1">DNA ligase that seals nicks in double-stranded DNA during DNA replication, DNA recombination and DNA repair.</text>
</comment>
<comment type="catalytic activity">
    <reaction evidence="1">
        <text>ATP + (deoxyribonucleotide)n-3'-hydroxyl + 5'-phospho-(deoxyribonucleotide)m = (deoxyribonucleotide)n+m + AMP + diphosphate.</text>
        <dbReference type="EC" id="6.5.1.1"/>
    </reaction>
</comment>
<comment type="cofactor">
    <cofactor evidence="1">
        <name>Mg(2+)</name>
        <dbReference type="ChEBI" id="CHEBI:18420"/>
    </cofactor>
</comment>
<comment type="similarity">
    <text evidence="1">Belongs to the ATP-dependent DNA ligase family.</text>
</comment>
<reference key="1">
    <citation type="submission" date="2006-12" db="EMBL/GenBank/DDBJ databases">
        <title>Complete sequence of Pyrobaculum islandicum DSM 4184.</title>
        <authorList>
            <person name="Copeland A."/>
            <person name="Lucas S."/>
            <person name="Lapidus A."/>
            <person name="Barry K."/>
            <person name="Detter J.C."/>
            <person name="Glavina del Rio T."/>
            <person name="Dalin E."/>
            <person name="Tice H."/>
            <person name="Pitluck S."/>
            <person name="Meincke L."/>
            <person name="Brettin T."/>
            <person name="Bruce D."/>
            <person name="Han C."/>
            <person name="Tapia R."/>
            <person name="Gilna P."/>
            <person name="Schmutz J."/>
            <person name="Larimer F."/>
            <person name="Land M."/>
            <person name="Hauser L."/>
            <person name="Kyrpides N."/>
            <person name="Mikhailova N."/>
            <person name="Cozen A.E."/>
            <person name="Fitz-Gibbon S.T."/>
            <person name="House C.H."/>
            <person name="Saltikov C."/>
            <person name="Lowe T."/>
            <person name="Richardson P."/>
        </authorList>
    </citation>
    <scope>NUCLEOTIDE SEQUENCE [LARGE SCALE GENOMIC DNA]</scope>
    <source>
        <strain>DSM 4184 / JCM 9189 / GEO3</strain>
    </source>
</reference>
<accession>A1RTK4</accession>
<protein>
    <recommendedName>
        <fullName evidence="1">DNA ligase</fullName>
        <ecNumber evidence="1">6.5.1.1</ecNumber>
    </recommendedName>
    <alternativeName>
        <fullName evidence="1">Polydeoxyribonucleotide synthase [ATP]</fullName>
    </alternativeName>
</protein>
<keyword id="KW-0067">ATP-binding</keyword>
<keyword id="KW-0131">Cell cycle</keyword>
<keyword id="KW-0132">Cell division</keyword>
<keyword id="KW-0227">DNA damage</keyword>
<keyword id="KW-0233">DNA recombination</keyword>
<keyword id="KW-0234">DNA repair</keyword>
<keyword id="KW-0235">DNA replication</keyword>
<keyword id="KW-0436">Ligase</keyword>
<keyword id="KW-0460">Magnesium</keyword>
<keyword id="KW-0479">Metal-binding</keyword>
<keyword id="KW-0547">Nucleotide-binding</keyword>
<gene>
    <name evidence="1" type="primary">lig</name>
    <name type="ordered locus">Pisl_1115</name>
</gene>
<evidence type="ECO:0000255" key="1">
    <source>
        <dbReference type="HAMAP-Rule" id="MF_00407"/>
    </source>
</evidence>
<feature type="chain" id="PRO_1000049877" description="DNA ligase">
    <location>
        <begin position="1"/>
        <end position="584"/>
    </location>
</feature>
<feature type="active site" description="N6-AMP-lysine intermediate" evidence="1">
    <location>
        <position position="251"/>
    </location>
</feature>
<feature type="binding site" evidence="1">
    <location>
        <position position="249"/>
    </location>
    <ligand>
        <name>ATP</name>
        <dbReference type="ChEBI" id="CHEBI:30616"/>
    </ligand>
</feature>
<feature type="binding site" evidence="1">
    <location>
        <position position="256"/>
    </location>
    <ligand>
        <name>ATP</name>
        <dbReference type="ChEBI" id="CHEBI:30616"/>
    </ligand>
</feature>
<feature type="binding site" evidence="1">
    <location>
        <position position="271"/>
    </location>
    <ligand>
        <name>ATP</name>
        <dbReference type="ChEBI" id="CHEBI:30616"/>
    </ligand>
</feature>
<feature type="binding site" evidence="1">
    <location>
        <position position="301"/>
    </location>
    <ligand>
        <name>ATP</name>
        <dbReference type="ChEBI" id="CHEBI:30616"/>
    </ligand>
</feature>
<feature type="binding site" evidence="1">
    <location>
        <position position="341"/>
    </location>
    <ligand>
        <name>ATP</name>
        <dbReference type="ChEBI" id="CHEBI:30616"/>
    </ligand>
</feature>
<feature type="binding site" evidence="1">
    <location>
        <position position="416"/>
    </location>
    <ligand>
        <name>ATP</name>
        <dbReference type="ChEBI" id="CHEBI:30616"/>
    </ligand>
</feature>
<feature type="binding site" evidence="1">
    <location>
        <position position="422"/>
    </location>
    <ligand>
        <name>ATP</name>
        <dbReference type="ChEBI" id="CHEBI:30616"/>
    </ligand>
</feature>
<proteinExistence type="inferred from homology"/>
<name>DNLI_PYRIL</name>
<sequence length="584" mass="65093">MQFGELVKTLAAVESTTQRTTMVKLLTSLFKKARPEEIDKIIYFVLGDLRPPWEGVELGVAEKLCLRAVSKATGVSISELEALYKKTGDVGEAARKALSTAKRPGLLAFGQQKPLEVSEVYDTLLKVAQASGEGAQDMKISLLASLFAKASPEEAKYIARFVVGKLRLGVADMTLIEALSDAFGVDKEALERAYHIYPDLGKLARHVAEGRPLEEIKITPGVPVLPMLAQRLSSSSEILAKLGGSAICEYKYDGERAQIHLKEGVVKIFSRRLEDITHAYPDVVKAVREAVSAREAILEGEIVAIDPDTGDMLPFQELMHRKRKHEVAVAVEMYPVVLNLFDLLYIDGEDLTNEPLIYRRVRLSEVVQETEKVSIAKWRVFDDAEEIDVFFHEAVSLGMEGLVCKSPTSVYEMGARGWNWIKYKRDYKSEMIDTVDLVVVGAFYGRGKRAGLYGAFLLAAYDPATDMFYTVCKVGSGFTDADLKKMYEMLQPYKIPHRHPRVVSKMEPDVWFTPQVVIEVIGAEITLSPLHTCCLGAVKPGVGLAIRFPRFTGRYRTDKSPEQATTVSEMIELYKRQKKVAQPE</sequence>